<gene>
    <name evidence="1" type="primary">speH</name>
    <name type="ordered locus">PSPA7_5494</name>
</gene>
<organism>
    <name type="scientific">Pseudomonas paraeruginosa (strain DSM 24068 / PA7)</name>
    <name type="common">Pseudomonas aeruginosa (strain PA7)</name>
    <dbReference type="NCBI Taxonomy" id="381754"/>
    <lineage>
        <taxon>Bacteria</taxon>
        <taxon>Pseudomonadati</taxon>
        <taxon>Pseudomonadota</taxon>
        <taxon>Gammaproteobacteria</taxon>
        <taxon>Pseudomonadales</taxon>
        <taxon>Pseudomonadaceae</taxon>
        <taxon>Pseudomonas</taxon>
        <taxon>Pseudomonas paraeruginosa</taxon>
    </lineage>
</organism>
<proteinExistence type="inferred from homology"/>
<reference key="1">
    <citation type="submission" date="2007-06" db="EMBL/GenBank/DDBJ databases">
        <authorList>
            <person name="Dodson R.J."/>
            <person name="Harkins D."/>
            <person name="Paulsen I.T."/>
        </authorList>
    </citation>
    <scope>NUCLEOTIDE SEQUENCE [LARGE SCALE GENOMIC DNA]</scope>
    <source>
        <strain>DSM 24068 / PA7</strain>
    </source>
</reference>
<comment type="function">
    <text evidence="1">Catalyzes the decarboxylation of S-adenosylmethionine to S-adenosylmethioninamine (dcAdoMet), the propylamine donor required for the synthesis of the polyamines spermine and spermidine from the diamine putrescine.</text>
</comment>
<comment type="catalytic activity">
    <reaction evidence="1">
        <text>S-adenosyl-L-methionine + H(+) = S-adenosyl 3-(methylsulfanyl)propylamine + CO2</text>
        <dbReference type="Rhea" id="RHEA:15981"/>
        <dbReference type="ChEBI" id="CHEBI:15378"/>
        <dbReference type="ChEBI" id="CHEBI:16526"/>
        <dbReference type="ChEBI" id="CHEBI:57443"/>
        <dbReference type="ChEBI" id="CHEBI:59789"/>
        <dbReference type="EC" id="4.1.1.50"/>
    </reaction>
</comment>
<comment type="cofactor">
    <cofactor evidence="1">
        <name>pyruvate</name>
        <dbReference type="ChEBI" id="CHEBI:15361"/>
    </cofactor>
    <text evidence="1">Binds 1 pyruvoyl group covalently per subunit.</text>
</comment>
<comment type="pathway">
    <text evidence="1">Amine and polyamine biosynthesis; S-adenosylmethioninamine biosynthesis; S-adenosylmethioninamine from S-adenosyl-L-methionine: step 1/1.</text>
</comment>
<comment type="subunit">
    <text evidence="1">Heterotetramer of two alpha and two beta chains arranged as a dimer of alpha/beta heterodimers.</text>
</comment>
<comment type="PTM">
    <text evidence="1">Is synthesized initially as an inactive proenzyme. Formation of the active enzyme involves a self-maturation process in which the active site pyruvoyl group is generated from an internal serine residue via an autocatalytic post-translational modification. Two non-identical subunits are generated from the proenzyme in this reaction, and the pyruvate is formed at the N-terminus of the alpha chain, which is derived from the carboxyl end of the proenzyme. The post-translation cleavage follows an unusual pathway, termed non-hydrolytic serinolysis, in which the side chain hydroxyl group of the serine supplies its oxygen atom to form the C-terminus of the beta chain, while the remainder of the serine residue undergoes an oxidative deamination to produce ammonia and the pyruvoyl group blocking the N-terminus of the alpha chain.</text>
</comment>
<comment type="similarity">
    <text evidence="1">Belongs to the prokaryotic AdoMetDC family. Type 1 subfamily.</text>
</comment>
<evidence type="ECO:0000255" key="1">
    <source>
        <dbReference type="HAMAP-Rule" id="MF_00464"/>
    </source>
</evidence>
<protein>
    <recommendedName>
        <fullName evidence="1">S-adenosylmethionine decarboxylase proenzyme</fullName>
        <shortName evidence="1">AdoMetDC</shortName>
        <shortName evidence="1">SAMDC</shortName>
        <ecNumber evidence="1">4.1.1.50</ecNumber>
    </recommendedName>
    <component>
        <recommendedName>
            <fullName evidence="1">S-adenosylmethionine decarboxylase beta chain</fullName>
        </recommendedName>
    </component>
    <component>
        <recommendedName>
            <fullName evidence="1">S-adenosylmethionine decarboxylase alpha chain</fullName>
        </recommendedName>
    </component>
</protein>
<accession>A6VCN1</accession>
<keyword id="KW-0068">Autocatalytic cleavage</keyword>
<keyword id="KW-0210">Decarboxylase</keyword>
<keyword id="KW-0456">Lyase</keyword>
<keyword id="KW-0620">Polyamine biosynthesis</keyword>
<keyword id="KW-0670">Pyruvate</keyword>
<keyword id="KW-0949">S-adenosyl-L-methionine</keyword>
<keyword id="KW-0704">Schiff base</keyword>
<keyword id="KW-0745">Spermidine biosynthesis</keyword>
<keyword id="KW-0865">Zymogen</keyword>
<feature type="chain" id="PRO_1000013681" description="S-adenosylmethionine decarboxylase beta chain" evidence="1">
    <location>
        <begin position="1"/>
        <end position="72"/>
    </location>
</feature>
<feature type="chain" id="PRO_0000315030" description="S-adenosylmethionine decarboxylase alpha chain" evidence="1">
    <location>
        <begin position="73"/>
        <end position="160"/>
    </location>
</feature>
<feature type="active site" description="Schiff-base intermediate with substrate; via pyruvic acid" evidence="1">
    <location>
        <position position="73"/>
    </location>
</feature>
<feature type="active site" description="Proton acceptor; for processing activity" evidence="1">
    <location>
        <position position="78"/>
    </location>
</feature>
<feature type="active site" description="Proton donor; for catalytic activity" evidence="1">
    <location>
        <position position="93"/>
    </location>
</feature>
<feature type="site" description="Cleavage (non-hydrolytic); by autolysis" evidence="1">
    <location>
        <begin position="72"/>
        <end position="73"/>
    </location>
</feature>
<feature type="modified residue" description="Pyruvic acid (Ser); by autocatalysis" evidence="1">
    <location>
        <position position="73"/>
    </location>
</feature>
<sequence length="160" mass="17208">MAIQPLRLDPITVLGKQLVIELFDCVDTRFDDIQWIEESMLEAARQANATIITSAFHKFSPIGISGVVVIAESHLAIHTWPEYGYAAVDVFTCGDVLDGAQAVRVLSERLGSQRHLISSMDRGLGGHRLGLLSRSLAGNAPVDGDSPTLRWALGQGTGVA</sequence>
<name>SPEH_PSEP7</name>
<dbReference type="EC" id="4.1.1.50" evidence="1"/>
<dbReference type="EMBL" id="CP000744">
    <property type="protein sequence ID" value="ABR82327.1"/>
    <property type="molecule type" value="Genomic_DNA"/>
</dbReference>
<dbReference type="RefSeq" id="WP_012077505.1">
    <property type="nucleotide sequence ID" value="NC_009656.1"/>
</dbReference>
<dbReference type="SMR" id="A6VCN1"/>
<dbReference type="GeneID" id="77223310"/>
<dbReference type="KEGG" id="pap:PSPA7_5494"/>
<dbReference type="HOGENOM" id="CLU_125470_2_3_6"/>
<dbReference type="UniPathway" id="UPA00331">
    <property type="reaction ID" value="UER00451"/>
</dbReference>
<dbReference type="Proteomes" id="UP000001582">
    <property type="component" value="Chromosome"/>
</dbReference>
<dbReference type="GO" id="GO:0005829">
    <property type="term" value="C:cytosol"/>
    <property type="evidence" value="ECO:0007669"/>
    <property type="project" value="TreeGrafter"/>
</dbReference>
<dbReference type="GO" id="GO:0004014">
    <property type="term" value="F:adenosylmethionine decarboxylase activity"/>
    <property type="evidence" value="ECO:0007669"/>
    <property type="project" value="UniProtKB-UniRule"/>
</dbReference>
<dbReference type="GO" id="GO:0008295">
    <property type="term" value="P:spermidine biosynthetic process"/>
    <property type="evidence" value="ECO:0007669"/>
    <property type="project" value="UniProtKB-UniRule"/>
</dbReference>
<dbReference type="Gene3D" id="3.60.90.10">
    <property type="entry name" value="S-adenosylmethionine decarboxylase"/>
    <property type="match status" value="1"/>
</dbReference>
<dbReference type="HAMAP" id="MF_00464">
    <property type="entry name" value="AdoMetDC_1"/>
    <property type="match status" value="1"/>
</dbReference>
<dbReference type="InterPro" id="IPR003826">
    <property type="entry name" value="AdoMetDC_fam_prok"/>
</dbReference>
<dbReference type="InterPro" id="IPR016067">
    <property type="entry name" value="S-AdoMet_deCO2ase_core"/>
</dbReference>
<dbReference type="InterPro" id="IPR017716">
    <property type="entry name" value="S-AdoMet_deCOase_pro-enz"/>
</dbReference>
<dbReference type="NCBIfam" id="TIGR03330">
    <property type="entry name" value="SAM_DCase_Bsu"/>
    <property type="match status" value="1"/>
</dbReference>
<dbReference type="PANTHER" id="PTHR33866">
    <property type="entry name" value="S-ADENOSYLMETHIONINE DECARBOXYLASE PROENZYME"/>
    <property type="match status" value="1"/>
</dbReference>
<dbReference type="PANTHER" id="PTHR33866:SF2">
    <property type="entry name" value="S-ADENOSYLMETHIONINE DECARBOXYLASE PROENZYME"/>
    <property type="match status" value="1"/>
</dbReference>
<dbReference type="Pfam" id="PF02675">
    <property type="entry name" value="AdoMet_dc"/>
    <property type="match status" value="1"/>
</dbReference>
<dbReference type="SUPFAM" id="SSF56276">
    <property type="entry name" value="S-adenosylmethionine decarboxylase"/>
    <property type="match status" value="1"/>
</dbReference>